<evidence type="ECO:0000255" key="1">
    <source>
        <dbReference type="HAMAP-Rule" id="MF_01465"/>
    </source>
</evidence>
<keyword id="KW-0150">Chloroplast</keyword>
<keyword id="KW-0472">Membrane</keyword>
<keyword id="KW-0934">Plastid</keyword>
<keyword id="KW-0653">Protein transport</keyword>
<keyword id="KW-0793">Thylakoid</keyword>
<keyword id="KW-0811">Translocation</keyword>
<keyword id="KW-0812">Transmembrane</keyword>
<keyword id="KW-1133">Transmembrane helix</keyword>
<keyword id="KW-0813">Transport</keyword>
<reference key="1">
    <citation type="journal article" date="1992" name="FEBS Lett.">
        <title>Characterisation of a chloroplast-encoded secY homologue and atpH from a chromophytic alga. Evidence for a novel chloroplast genome organisation.</title>
        <authorList>
            <person name="Scaramuzzi C.D."/>
            <person name="Stokes H.W."/>
            <person name="Hiller R.G."/>
        </authorList>
    </citation>
    <scope>NUCLEOTIDE SEQUENCE [GENOMIC DNA]</scope>
</reference>
<sequence>MKKAFVLEGPLVLRLFRTIMILIFARLGNYIPIPGITEVESFYESSFRNTSIYNLSALSGGSNVISILTLGLGPFFSASLAVQFLVKLYPAFEKLQNEEGEEGRKTIVRYTRILTVLFCIIESFFLSNSLRSFVFNWNSISYFVVAAAVTTGSLVLVWLSEVITERGIGNGSSLLILIGNLSRFRFLINKDDFDSLNVSSQSNLYIIYIIITLVSMLIFSTLSQEGARKIPVVSAKQLIDGVEDDMRRSYIPIRFGQAGVVPIIFSSSILLFLTTSIKQLPNANIATRVILDSVNLQQIFYFFTFLVLIIFFSFFYTLIILSPSDIAKNLKKMSSVIQDTKPGVATKVYIRKFILQASFVGSILLSALILIPSILAAALGVHPLSISGITSLILSFSIINDTVRQVLAYRDTRKFLLSS</sequence>
<comment type="function">
    <text evidence="1">The central subunit of the protein translocation channel SecYE. Consists of two halves formed by TMs 1-5 and 6-10. These two domains form a lateral gate at the front which open onto the bilayer between TMs 2 and 7, and are clamped together by SecE at the back. The channel is closed by both a pore ring composed of hydrophobic SecY resides and a short helix (helix 2A) on the extracellular side of the membrane which forms a plug.</text>
</comment>
<comment type="subunit">
    <text evidence="1">Component of the plastid Sec protein translocase complex, which is composed of at least SecY and SecE.</text>
</comment>
<comment type="subcellular location">
    <subcellularLocation>
        <location evidence="1">Plastid</location>
        <location evidence="1">Chloroplast thylakoid membrane</location>
        <topology evidence="1">Multi-pass membrane protein</topology>
    </subcellularLocation>
</comment>
<comment type="similarity">
    <text evidence="1">Belongs to the SecY/SEC61-alpha family.</text>
</comment>
<geneLocation type="chloroplast"/>
<protein>
    <recommendedName>
        <fullName evidence="1">Protein translocase subunit SecY</fullName>
    </recommendedName>
</protein>
<feature type="chain" id="PRO_0000131777" description="Protein translocase subunit SecY">
    <location>
        <begin position="1"/>
        <end position="419"/>
    </location>
</feature>
<feature type="transmembrane region" description="Helical" evidence="1">
    <location>
        <begin position="19"/>
        <end position="39"/>
    </location>
</feature>
<feature type="transmembrane region" description="Helical" evidence="1">
    <location>
        <begin position="64"/>
        <end position="84"/>
    </location>
</feature>
<feature type="transmembrane region" description="Helical" evidence="1">
    <location>
        <begin position="113"/>
        <end position="133"/>
    </location>
</feature>
<feature type="transmembrane region" description="Helical" evidence="1">
    <location>
        <begin position="143"/>
        <end position="163"/>
    </location>
</feature>
<feature type="transmembrane region" description="Helical" evidence="1">
    <location>
        <begin position="167"/>
        <end position="189"/>
    </location>
</feature>
<feature type="transmembrane region" description="Helical" evidence="1">
    <location>
        <begin position="202"/>
        <end position="222"/>
    </location>
</feature>
<feature type="transmembrane region" description="Helical" evidence="1">
    <location>
        <begin position="255"/>
        <end position="275"/>
    </location>
</feature>
<feature type="transmembrane region" description="Helical" evidence="1">
    <location>
        <begin position="299"/>
        <end position="319"/>
    </location>
</feature>
<feature type="transmembrane region" description="Helical" evidence="1">
    <location>
        <begin position="359"/>
        <end position="379"/>
    </location>
</feature>
<feature type="transmembrane region" description="Helical" evidence="1">
    <location>
        <begin position="380"/>
        <end position="400"/>
    </location>
</feature>
<name>SECY_DIALT</name>
<accession>P28540</accession>
<organism>
    <name type="scientific">Diacronema lutheri</name>
    <name type="common">Unicellular marine alga</name>
    <name type="synonym">Monochrysis lutheri</name>
    <dbReference type="NCBI Taxonomy" id="2081491"/>
    <lineage>
        <taxon>Eukaryota</taxon>
        <taxon>Haptista</taxon>
        <taxon>Haptophyta</taxon>
        <taxon>Pavlovales</taxon>
        <taxon>Pavlovaceae</taxon>
        <taxon>Diacronema</taxon>
    </lineage>
</organism>
<dbReference type="EMBL" id="X64732">
    <property type="protein sequence ID" value="CAA45998.1"/>
    <property type="molecule type" value="Genomic_DNA"/>
</dbReference>
<dbReference type="PIR" id="S23425">
    <property type="entry name" value="S23425"/>
</dbReference>
<dbReference type="SMR" id="P28540"/>
<dbReference type="GO" id="GO:0009535">
    <property type="term" value="C:chloroplast thylakoid membrane"/>
    <property type="evidence" value="ECO:0007669"/>
    <property type="project" value="UniProtKB-SubCell"/>
</dbReference>
<dbReference type="GO" id="GO:0065002">
    <property type="term" value="P:intracellular protein transmembrane transport"/>
    <property type="evidence" value="ECO:0007669"/>
    <property type="project" value="UniProtKB-UniRule"/>
</dbReference>
<dbReference type="GO" id="GO:0006605">
    <property type="term" value="P:protein targeting"/>
    <property type="evidence" value="ECO:0007669"/>
    <property type="project" value="UniProtKB-UniRule"/>
</dbReference>
<dbReference type="Gene3D" id="1.10.3370.10">
    <property type="entry name" value="SecY subunit domain"/>
    <property type="match status" value="1"/>
</dbReference>
<dbReference type="HAMAP" id="MF_01465">
    <property type="entry name" value="SecY"/>
    <property type="match status" value="1"/>
</dbReference>
<dbReference type="InterPro" id="IPR026593">
    <property type="entry name" value="SecY"/>
</dbReference>
<dbReference type="InterPro" id="IPR002208">
    <property type="entry name" value="SecY/SEC61-alpha"/>
</dbReference>
<dbReference type="InterPro" id="IPR030659">
    <property type="entry name" value="SecY_CS"/>
</dbReference>
<dbReference type="InterPro" id="IPR023201">
    <property type="entry name" value="SecY_dom_sf"/>
</dbReference>
<dbReference type="NCBIfam" id="TIGR00967">
    <property type="entry name" value="3a0501s007"/>
    <property type="match status" value="1"/>
</dbReference>
<dbReference type="PANTHER" id="PTHR10906">
    <property type="entry name" value="SECY/SEC61-ALPHA FAMILY MEMBER"/>
    <property type="match status" value="1"/>
</dbReference>
<dbReference type="Pfam" id="PF00344">
    <property type="entry name" value="SecY"/>
    <property type="match status" value="1"/>
</dbReference>
<dbReference type="PIRSF" id="PIRSF004557">
    <property type="entry name" value="SecY"/>
    <property type="match status" value="1"/>
</dbReference>
<dbReference type="PRINTS" id="PR00303">
    <property type="entry name" value="SECYTRNLCASE"/>
</dbReference>
<dbReference type="SUPFAM" id="SSF103491">
    <property type="entry name" value="Preprotein translocase SecY subunit"/>
    <property type="match status" value="1"/>
</dbReference>
<dbReference type="PROSITE" id="PS00755">
    <property type="entry name" value="SECY_1"/>
    <property type="match status" value="1"/>
</dbReference>
<dbReference type="PROSITE" id="PS00756">
    <property type="entry name" value="SECY_2"/>
    <property type="match status" value="1"/>
</dbReference>
<gene>
    <name evidence="1" type="primary">secY</name>
</gene>
<proteinExistence type="inferred from homology"/>